<proteinExistence type="inferred from homology"/>
<gene>
    <name evidence="1" type="primary">smc</name>
    <name type="ordered locus">lp_1632</name>
</gene>
<dbReference type="EMBL" id="AL935263">
    <property type="protein sequence ID" value="CCC78943.1"/>
    <property type="molecule type" value="Genomic_DNA"/>
</dbReference>
<dbReference type="RefSeq" id="WP_011101482.1">
    <property type="nucleotide sequence ID" value="NC_004567.2"/>
</dbReference>
<dbReference type="RefSeq" id="YP_004889457.1">
    <property type="nucleotide sequence ID" value="NC_004567.2"/>
</dbReference>
<dbReference type="SMR" id="Q88WJ9"/>
<dbReference type="STRING" id="220668.lp_1632"/>
<dbReference type="EnsemblBacteria" id="CCC78943">
    <property type="protein sequence ID" value="CCC78943"/>
    <property type="gene ID" value="lp_1632"/>
</dbReference>
<dbReference type="KEGG" id="lpl:lp_1632"/>
<dbReference type="PATRIC" id="fig|220668.9.peg.1379"/>
<dbReference type="eggNOG" id="COG1196">
    <property type="taxonomic scope" value="Bacteria"/>
</dbReference>
<dbReference type="HOGENOM" id="CLU_001042_2_2_9"/>
<dbReference type="OrthoDB" id="9808768at2"/>
<dbReference type="PhylomeDB" id="Q88WJ9"/>
<dbReference type="Proteomes" id="UP000000432">
    <property type="component" value="Chromosome"/>
</dbReference>
<dbReference type="GO" id="GO:0005694">
    <property type="term" value="C:chromosome"/>
    <property type="evidence" value="ECO:0007669"/>
    <property type="project" value="InterPro"/>
</dbReference>
<dbReference type="GO" id="GO:0005737">
    <property type="term" value="C:cytoplasm"/>
    <property type="evidence" value="ECO:0007669"/>
    <property type="project" value="UniProtKB-SubCell"/>
</dbReference>
<dbReference type="GO" id="GO:0005524">
    <property type="term" value="F:ATP binding"/>
    <property type="evidence" value="ECO:0007669"/>
    <property type="project" value="UniProtKB-UniRule"/>
</dbReference>
<dbReference type="GO" id="GO:0016887">
    <property type="term" value="F:ATP hydrolysis activity"/>
    <property type="evidence" value="ECO:0007669"/>
    <property type="project" value="InterPro"/>
</dbReference>
<dbReference type="GO" id="GO:0003677">
    <property type="term" value="F:DNA binding"/>
    <property type="evidence" value="ECO:0007669"/>
    <property type="project" value="UniProtKB-UniRule"/>
</dbReference>
<dbReference type="GO" id="GO:0030261">
    <property type="term" value="P:chromosome condensation"/>
    <property type="evidence" value="ECO:0007669"/>
    <property type="project" value="InterPro"/>
</dbReference>
<dbReference type="GO" id="GO:0007059">
    <property type="term" value="P:chromosome segregation"/>
    <property type="evidence" value="ECO:0007669"/>
    <property type="project" value="UniProtKB-UniRule"/>
</dbReference>
<dbReference type="GO" id="GO:0006260">
    <property type="term" value="P:DNA replication"/>
    <property type="evidence" value="ECO:0007669"/>
    <property type="project" value="UniProtKB-UniRule"/>
</dbReference>
<dbReference type="GO" id="GO:0007062">
    <property type="term" value="P:sister chromatid cohesion"/>
    <property type="evidence" value="ECO:0007669"/>
    <property type="project" value="InterPro"/>
</dbReference>
<dbReference type="CDD" id="cd03278">
    <property type="entry name" value="ABC_SMC_barmotin"/>
    <property type="match status" value="2"/>
</dbReference>
<dbReference type="FunFam" id="3.40.50.300:FF:000901">
    <property type="entry name" value="Chromosome partition protein Smc"/>
    <property type="match status" value="1"/>
</dbReference>
<dbReference type="FunFam" id="3.40.50.300:FF:000984">
    <property type="entry name" value="Chromosome partition protein Smc"/>
    <property type="match status" value="1"/>
</dbReference>
<dbReference type="Gene3D" id="1.20.1060.20">
    <property type="match status" value="1"/>
</dbReference>
<dbReference type="Gene3D" id="3.30.70.1620">
    <property type="match status" value="1"/>
</dbReference>
<dbReference type="Gene3D" id="3.40.50.300">
    <property type="entry name" value="P-loop containing nucleotide triphosphate hydrolases"/>
    <property type="match status" value="2"/>
</dbReference>
<dbReference type="HAMAP" id="MF_01894">
    <property type="entry name" value="Smc_prok"/>
    <property type="match status" value="1"/>
</dbReference>
<dbReference type="InterPro" id="IPR027417">
    <property type="entry name" value="P-loop_NTPase"/>
</dbReference>
<dbReference type="InterPro" id="IPR003395">
    <property type="entry name" value="RecF/RecN/SMC_N"/>
</dbReference>
<dbReference type="InterPro" id="IPR024704">
    <property type="entry name" value="SMC"/>
</dbReference>
<dbReference type="InterPro" id="IPR010935">
    <property type="entry name" value="SMC_hinge"/>
</dbReference>
<dbReference type="InterPro" id="IPR036277">
    <property type="entry name" value="SMC_hinge_sf"/>
</dbReference>
<dbReference type="InterPro" id="IPR011890">
    <property type="entry name" value="SMC_prok"/>
</dbReference>
<dbReference type="NCBIfam" id="TIGR02168">
    <property type="entry name" value="SMC_prok_B"/>
    <property type="match status" value="1"/>
</dbReference>
<dbReference type="PANTHER" id="PTHR43977">
    <property type="entry name" value="STRUCTURAL MAINTENANCE OF CHROMOSOMES PROTEIN 3"/>
    <property type="match status" value="1"/>
</dbReference>
<dbReference type="Pfam" id="PF06470">
    <property type="entry name" value="SMC_hinge"/>
    <property type="match status" value="1"/>
</dbReference>
<dbReference type="Pfam" id="PF02463">
    <property type="entry name" value="SMC_N"/>
    <property type="match status" value="1"/>
</dbReference>
<dbReference type="PIRSF" id="PIRSF005719">
    <property type="entry name" value="SMC"/>
    <property type="match status" value="1"/>
</dbReference>
<dbReference type="SMART" id="SM00968">
    <property type="entry name" value="SMC_hinge"/>
    <property type="match status" value="1"/>
</dbReference>
<dbReference type="SUPFAM" id="SSF52540">
    <property type="entry name" value="P-loop containing nucleoside triphosphate hydrolases"/>
    <property type="match status" value="1"/>
</dbReference>
<dbReference type="SUPFAM" id="SSF75553">
    <property type="entry name" value="Smc hinge domain"/>
    <property type="match status" value="1"/>
</dbReference>
<reference key="1">
    <citation type="journal article" date="2003" name="Proc. Natl. Acad. Sci. U.S.A.">
        <title>Complete genome sequence of Lactobacillus plantarum WCFS1.</title>
        <authorList>
            <person name="Kleerebezem M."/>
            <person name="Boekhorst J."/>
            <person name="van Kranenburg R."/>
            <person name="Molenaar D."/>
            <person name="Kuipers O.P."/>
            <person name="Leer R."/>
            <person name="Tarchini R."/>
            <person name="Peters S.A."/>
            <person name="Sandbrink H.M."/>
            <person name="Fiers M.W.E.J."/>
            <person name="Stiekema W."/>
            <person name="Klein Lankhorst R.M."/>
            <person name="Bron P.A."/>
            <person name="Hoffer S.M."/>
            <person name="Nierop Groot M.N."/>
            <person name="Kerkhoven R."/>
            <person name="De Vries M."/>
            <person name="Ursing B."/>
            <person name="De Vos W.M."/>
            <person name="Siezen R.J."/>
        </authorList>
    </citation>
    <scope>NUCLEOTIDE SEQUENCE [LARGE SCALE GENOMIC DNA]</scope>
    <source>
        <strain>ATCC BAA-793 / NCIMB 8826 / WCFS1</strain>
    </source>
</reference>
<reference key="2">
    <citation type="journal article" date="2012" name="J. Bacteriol.">
        <title>Complete resequencing and reannotation of the Lactobacillus plantarum WCFS1 genome.</title>
        <authorList>
            <person name="Siezen R.J."/>
            <person name="Francke C."/>
            <person name="Renckens B."/>
            <person name="Boekhorst J."/>
            <person name="Wels M."/>
            <person name="Kleerebezem M."/>
            <person name="van Hijum S.A."/>
        </authorList>
    </citation>
    <scope>NUCLEOTIDE SEQUENCE [LARGE SCALE GENOMIC DNA]</scope>
    <scope>GENOME REANNOTATION</scope>
    <source>
        <strain>ATCC BAA-793 / NCIMB 8826 / WCFS1</strain>
    </source>
</reference>
<name>SMC_LACPL</name>
<evidence type="ECO:0000255" key="1">
    <source>
        <dbReference type="HAMAP-Rule" id="MF_01894"/>
    </source>
</evidence>
<evidence type="ECO:0000256" key="2">
    <source>
        <dbReference type="SAM" id="MobiDB-lite"/>
    </source>
</evidence>
<protein>
    <recommendedName>
        <fullName evidence="1">Chromosome partition protein Smc</fullName>
    </recommendedName>
</protein>
<sequence>MQLKSLEISGFKSFADKTKIDFQAGMTGIVGPNGSGKSNIIEAIRWVLGEQAVKSLRGTKMTDVIFAGSANRKPLNMAKVTITFDNSDHFLPLDYAEVSITRKLFRNGDSDYLINNQSCRLKDITNLMIDTGLGKDSFSVISQGRVEAVFNAKPEERRSIIEDVAGVLKYKKDKFTTENKLAETTDYLDRVNDIIAELNQQKGPLEEQASLARDYQDQKQKFDYLDRSRLVKKLTIARDQLQGVNEKLASAKALVAKYQQQVDAGATKLANLKTQQTAQLKQKDELVAQNLELIKTIENTQGQQGVDAERRQNQQSEQERLTASLTATEQQIATQTEQQTQLEQTLSEQQAQVKAVKAQVAELTTATSAAGRQQLADELEKLRNAYIDEKQVQAELNNEAKNLVKQHQQSGSQSTALAERLAQAQANLKRVQTTVDVHNREQRDLENQVSQQQATLTAQQAQVKTNAERIDEQQQRWLDAAGLMQREKSRLEALQAVQERYTNFYAGVRMVLQHRQQFSGVAGAVSELLTVPDQYTKAVEVALGGQLQNIVCDTQQTAKTVVNFLKQNHAGRATFLPIERITARQLPVNTERDLSQQPGVLGVASELVDCESRLTAIKRYLLGTTAIVDTLDHAMAISRSRRFRCKLVTIDGETIAASGAITGGATRHDDNGLLQQQQSAEKIAANVAQMQSELVTYEQGLADLKKANQDLTVQVETTRQQLSELKDRLSQTQAQLQAAQSEQTQLSRQVKALTYEQQQTQADDSYEDLVARNQQAQAANAAKLKDYQDQMKTVQQQQTDYESYQQTQTTKLQAQREQLITLQEHVKQTQRQLEQCQATLAQNEETKKQIQADLTAIKTTLASQQMSVAERDTVLKTAKAKQAAVEEQRKTCEQQLATLNDQVEELSTQQVRLQQLAAAATDDYRRLELSQTKLTGEVDHATADLAEKYQLTVAAAQADVSGLALPAITEQLKLLKRGLDEIGTVNLGAIDEFERVKERFDFLNNQASDLTEAKEHLLQTMADLDTTVATRFKTAFDQVASEFSTIFEQMFGGGKAELILTDPEHLLTSGVDIMAQPPGKKFQRLSLLSGGERALTAITLLFAILAVRPVPFSILDEAEAALDDANVDRFSQYLNDFQTGTQFVIITHRKGTMMHADVLYGVTMEESGVSKMVSVSLADLKDEQK</sequence>
<organism>
    <name type="scientific">Lactiplantibacillus plantarum (strain ATCC BAA-793 / NCIMB 8826 / WCFS1)</name>
    <name type="common">Lactobacillus plantarum</name>
    <dbReference type="NCBI Taxonomy" id="220668"/>
    <lineage>
        <taxon>Bacteria</taxon>
        <taxon>Bacillati</taxon>
        <taxon>Bacillota</taxon>
        <taxon>Bacilli</taxon>
        <taxon>Lactobacillales</taxon>
        <taxon>Lactobacillaceae</taxon>
        <taxon>Lactiplantibacillus</taxon>
    </lineage>
</organism>
<feature type="chain" id="PRO_0000409275" description="Chromosome partition protein Smc">
    <location>
        <begin position="1"/>
        <end position="1185"/>
    </location>
</feature>
<feature type="domain" description="SMC hinge">
    <location>
        <begin position="519"/>
        <end position="637"/>
    </location>
</feature>
<feature type="region of interest" description="Disordered" evidence="2">
    <location>
        <begin position="300"/>
        <end position="323"/>
    </location>
</feature>
<feature type="coiled-coil region" evidence="1">
    <location>
        <begin position="228"/>
        <end position="503"/>
    </location>
</feature>
<feature type="coiled-coil region" evidence="1">
    <location>
        <begin position="675"/>
        <end position="928"/>
    </location>
</feature>
<feature type="coiled-coil region" evidence="1">
    <location>
        <begin position="989"/>
        <end position="1025"/>
    </location>
</feature>
<feature type="compositionally biased region" description="Basic and acidic residues" evidence="2">
    <location>
        <begin position="307"/>
        <end position="320"/>
    </location>
</feature>
<feature type="binding site" evidence="1">
    <location>
        <begin position="32"/>
        <end position="39"/>
    </location>
    <ligand>
        <name>ATP</name>
        <dbReference type="ChEBI" id="CHEBI:30616"/>
    </ligand>
</feature>
<comment type="function">
    <text evidence="1">Required for chromosome condensation and partitioning.</text>
</comment>
<comment type="subunit">
    <text evidence="1">Homodimer.</text>
</comment>
<comment type="subcellular location">
    <subcellularLocation>
        <location evidence="1">Cytoplasm</location>
    </subcellularLocation>
</comment>
<comment type="domain">
    <text evidence="1">Contains large globular domains required for ATP hydrolysis at each terminus and a third globular domain forming a flexible SMC hinge near the middle of the molecule. These domains are separated by coiled-coil structures.</text>
</comment>
<comment type="similarity">
    <text evidence="1">Belongs to the SMC family.</text>
</comment>
<keyword id="KW-0067">ATP-binding</keyword>
<keyword id="KW-0175">Coiled coil</keyword>
<keyword id="KW-0963">Cytoplasm</keyword>
<keyword id="KW-0238">DNA-binding</keyword>
<keyword id="KW-0547">Nucleotide-binding</keyword>
<keyword id="KW-1185">Reference proteome</keyword>
<accession>Q88WJ9</accession>
<accession>F9UP04</accession>